<evidence type="ECO:0000255" key="1">
    <source>
        <dbReference type="HAMAP-Rule" id="MF_01026"/>
    </source>
</evidence>
<dbReference type="EC" id="4.2.1.33" evidence="1"/>
<dbReference type="EMBL" id="DQ489736">
    <property type="protein sequence ID" value="ACA83314.1"/>
    <property type="molecule type" value="Genomic_DNA"/>
</dbReference>
<dbReference type="RefSeq" id="WP_004906818.1">
    <property type="nucleotide sequence ID" value="NC_010471.1"/>
</dbReference>
<dbReference type="SMR" id="B1MVR0"/>
<dbReference type="STRING" id="349519.LCK_01490"/>
<dbReference type="KEGG" id="lci:LCK_01490"/>
<dbReference type="eggNOG" id="COG0065">
    <property type="taxonomic scope" value="Bacteria"/>
</dbReference>
<dbReference type="HOGENOM" id="CLU_006714_3_4_9"/>
<dbReference type="OrthoDB" id="9802769at2"/>
<dbReference type="UniPathway" id="UPA00048">
    <property type="reaction ID" value="UER00071"/>
</dbReference>
<dbReference type="Proteomes" id="UP000002166">
    <property type="component" value="Chromosome"/>
</dbReference>
<dbReference type="GO" id="GO:0003861">
    <property type="term" value="F:3-isopropylmalate dehydratase activity"/>
    <property type="evidence" value="ECO:0007669"/>
    <property type="project" value="UniProtKB-UniRule"/>
</dbReference>
<dbReference type="GO" id="GO:0051539">
    <property type="term" value="F:4 iron, 4 sulfur cluster binding"/>
    <property type="evidence" value="ECO:0007669"/>
    <property type="project" value="UniProtKB-KW"/>
</dbReference>
<dbReference type="GO" id="GO:0046872">
    <property type="term" value="F:metal ion binding"/>
    <property type="evidence" value="ECO:0007669"/>
    <property type="project" value="UniProtKB-KW"/>
</dbReference>
<dbReference type="GO" id="GO:0009098">
    <property type="term" value="P:L-leucine biosynthetic process"/>
    <property type="evidence" value="ECO:0007669"/>
    <property type="project" value="UniProtKB-UniRule"/>
</dbReference>
<dbReference type="CDD" id="cd01583">
    <property type="entry name" value="IPMI"/>
    <property type="match status" value="1"/>
</dbReference>
<dbReference type="Gene3D" id="3.30.499.10">
    <property type="entry name" value="Aconitase, domain 3"/>
    <property type="match status" value="2"/>
</dbReference>
<dbReference type="HAMAP" id="MF_01026">
    <property type="entry name" value="LeuC_type1"/>
    <property type="match status" value="1"/>
</dbReference>
<dbReference type="InterPro" id="IPR004430">
    <property type="entry name" value="3-IsopropMal_deHydase_lsu"/>
</dbReference>
<dbReference type="InterPro" id="IPR015931">
    <property type="entry name" value="Acnase/IPM_dHydase_lsu_aba_1/3"/>
</dbReference>
<dbReference type="InterPro" id="IPR001030">
    <property type="entry name" value="Acoase/IPM_deHydtase_lsu_aba"/>
</dbReference>
<dbReference type="InterPro" id="IPR018136">
    <property type="entry name" value="Aconitase_4Fe-4S_BS"/>
</dbReference>
<dbReference type="InterPro" id="IPR036008">
    <property type="entry name" value="Aconitase_4Fe-4S_dom"/>
</dbReference>
<dbReference type="InterPro" id="IPR050067">
    <property type="entry name" value="IPM_dehydratase_rel_enz"/>
</dbReference>
<dbReference type="InterPro" id="IPR033941">
    <property type="entry name" value="IPMI_cat"/>
</dbReference>
<dbReference type="NCBIfam" id="TIGR00170">
    <property type="entry name" value="leuC"/>
    <property type="match status" value="1"/>
</dbReference>
<dbReference type="NCBIfam" id="NF004016">
    <property type="entry name" value="PRK05478.1"/>
    <property type="match status" value="1"/>
</dbReference>
<dbReference type="NCBIfam" id="NF009116">
    <property type="entry name" value="PRK12466.1"/>
    <property type="match status" value="1"/>
</dbReference>
<dbReference type="PANTHER" id="PTHR43822:SF9">
    <property type="entry name" value="3-ISOPROPYLMALATE DEHYDRATASE"/>
    <property type="match status" value="1"/>
</dbReference>
<dbReference type="PANTHER" id="PTHR43822">
    <property type="entry name" value="HOMOACONITASE, MITOCHONDRIAL-RELATED"/>
    <property type="match status" value="1"/>
</dbReference>
<dbReference type="Pfam" id="PF00330">
    <property type="entry name" value="Aconitase"/>
    <property type="match status" value="1"/>
</dbReference>
<dbReference type="PRINTS" id="PR00415">
    <property type="entry name" value="ACONITASE"/>
</dbReference>
<dbReference type="SUPFAM" id="SSF53732">
    <property type="entry name" value="Aconitase iron-sulfur domain"/>
    <property type="match status" value="1"/>
</dbReference>
<dbReference type="PROSITE" id="PS00450">
    <property type="entry name" value="ACONITASE_1"/>
    <property type="match status" value="1"/>
</dbReference>
<dbReference type="PROSITE" id="PS01244">
    <property type="entry name" value="ACONITASE_2"/>
    <property type="match status" value="1"/>
</dbReference>
<reference key="1">
    <citation type="journal article" date="2008" name="J. Bacteriol.">
        <title>Complete genome sequence of Leuconostoc citreum KM20.</title>
        <authorList>
            <person name="Kim J.F."/>
            <person name="Jeong H."/>
            <person name="Lee J.-S."/>
            <person name="Choi S.-H."/>
            <person name="Ha M."/>
            <person name="Hur C.-G."/>
            <person name="Kim J.-S."/>
            <person name="Lee S."/>
            <person name="Park H.-S."/>
            <person name="Park Y.-H."/>
            <person name="Oh T.K."/>
        </authorList>
    </citation>
    <scope>NUCLEOTIDE SEQUENCE [LARGE SCALE GENOMIC DNA]</scope>
    <source>
        <strain>KM20</strain>
    </source>
</reference>
<name>LEUC_LEUCK</name>
<protein>
    <recommendedName>
        <fullName evidence="1">3-isopropylmalate dehydratase large subunit</fullName>
        <ecNumber evidence="1">4.2.1.33</ecNumber>
    </recommendedName>
    <alternativeName>
        <fullName evidence="1">Alpha-IPM isomerase</fullName>
        <shortName evidence="1">IPMI</shortName>
    </alternativeName>
    <alternativeName>
        <fullName evidence="1">Isopropylmalate isomerase</fullName>
    </alternativeName>
</protein>
<comment type="function">
    <text evidence="1">Catalyzes the isomerization between 2-isopropylmalate and 3-isopropylmalate, via the formation of 2-isopropylmaleate.</text>
</comment>
<comment type="catalytic activity">
    <reaction evidence="1">
        <text>(2R,3S)-3-isopropylmalate = (2S)-2-isopropylmalate</text>
        <dbReference type="Rhea" id="RHEA:32287"/>
        <dbReference type="ChEBI" id="CHEBI:1178"/>
        <dbReference type="ChEBI" id="CHEBI:35121"/>
        <dbReference type="EC" id="4.2.1.33"/>
    </reaction>
</comment>
<comment type="cofactor">
    <cofactor evidence="1">
        <name>[4Fe-4S] cluster</name>
        <dbReference type="ChEBI" id="CHEBI:49883"/>
    </cofactor>
    <text evidence="1">Binds 1 [4Fe-4S] cluster per subunit.</text>
</comment>
<comment type="pathway">
    <text evidence="1">Amino-acid biosynthesis; L-leucine biosynthesis; L-leucine from 3-methyl-2-oxobutanoate: step 2/4.</text>
</comment>
<comment type="subunit">
    <text evidence="1">Heterodimer of LeuC and LeuD.</text>
</comment>
<comment type="similarity">
    <text evidence="1">Belongs to the aconitase/IPM isomerase family. LeuC type 1 subfamily.</text>
</comment>
<sequence length="455" mass="49543">MKQTLFDKIWNTHVVAGEPGEAQLIYVDLHLIHEVTSPQPFDGLRSTKRQLRRPDLTFATMDHNVPTKDIFNIEDQMSRLQMDTLVKNAQEFGVPLASIGDDKQGIVHVVGPERGLTQPGKVIVCGDSHTATHGAFGAIAFGIGTSEVEHVMATQTIWQVKPKTMGIKVTGEMPKNTYAKDIIMAIIAEHGVSFGTGYAIEFYGETIEALSMAARMTLCNMSIEAGSKTGMVKPDQTTFDYIAGREFAPKKFDSAKAYWSQFYTDDETAFDEIITFDVSHLKPMVTWGTNPGMATAVDQILPEIRDDNDRAAYDYIGLEPGIPVTDIPLDYIFIGSCTNSRYEDLAIAAAMMKGQHLAPNITAWIVPGSRAIRNRAIATSIAKIFEAAGCEWREPGCSACLAMNPDKIPAGKHVASTSNRNFIGRQGAGSRTHLASPAMVAAAGIAGHFVDITEI</sequence>
<proteinExistence type="inferred from homology"/>
<gene>
    <name evidence="1" type="primary">leuC</name>
    <name type="ordered locus">LCK_01490</name>
</gene>
<accession>B1MVR0</accession>
<feature type="chain" id="PRO_1000135691" description="3-isopropylmalate dehydratase large subunit">
    <location>
        <begin position="1"/>
        <end position="455"/>
    </location>
</feature>
<feature type="binding site" evidence="1">
    <location>
        <position position="337"/>
    </location>
    <ligand>
        <name>[4Fe-4S] cluster</name>
        <dbReference type="ChEBI" id="CHEBI:49883"/>
    </ligand>
</feature>
<feature type="binding site" evidence="1">
    <location>
        <position position="397"/>
    </location>
    <ligand>
        <name>[4Fe-4S] cluster</name>
        <dbReference type="ChEBI" id="CHEBI:49883"/>
    </ligand>
</feature>
<feature type="binding site" evidence="1">
    <location>
        <position position="400"/>
    </location>
    <ligand>
        <name>[4Fe-4S] cluster</name>
        <dbReference type="ChEBI" id="CHEBI:49883"/>
    </ligand>
</feature>
<keyword id="KW-0004">4Fe-4S</keyword>
<keyword id="KW-0028">Amino-acid biosynthesis</keyword>
<keyword id="KW-0100">Branched-chain amino acid biosynthesis</keyword>
<keyword id="KW-0408">Iron</keyword>
<keyword id="KW-0411">Iron-sulfur</keyword>
<keyword id="KW-0432">Leucine biosynthesis</keyword>
<keyword id="KW-0456">Lyase</keyword>
<keyword id="KW-0479">Metal-binding</keyword>
<keyword id="KW-1185">Reference proteome</keyword>
<organism>
    <name type="scientific">Leuconostoc citreum (strain KM20)</name>
    <dbReference type="NCBI Taxonomy" id="349519"/>
    <lineage>
        <taxon>Bacteria</taxon>
        <taxon>Bacillati</taxon>
        <taxon>Bacillota</taxon>
        <taxon>Bacilli</taxon>
        <taxon>Lactobacillales</taxon>
        <taxon>Lactobacillaceae</taxon>
        <taxon>Leuconostoc</taxon>
    </lineage>
</organism>